<gene>
    <name type="primary">CYTB5-E</name>
    <name type="synonym">B5-A</name>
    <name evidence="11" type="synonym">CB5-A</name>
    <name evidence="10" type="synonym">CB5-E</name>
    <name type="ordered locus">At5g53560</name>
    <name type="ORF">MNC6.10</name>
</gene>
<proteinExistence type="evidence at protein level"/>
<keyword id="KW-1003">Cell membrane</keyword>
<keyword id="KW-0249">Electron transport</keyword>
<keyword id="KW-0256">Endoplasmic reticulum</keyword>
<keyword id="KW-0349">Heme</keyword>
<keyword id="KW-0408">Iron</keyword>
<keyword id="KW-0472">Membrane</keyword>
<keyword id="KW-0479">Metal-binding</keyword>
<keyword id="KW-1185">Reference proteome</keyword>
<keyword id="KW-0812">Transmembrane</keyword>
<keyword id="KW-1133">Transmembrane helix</keyword>
<keyword id="KW-0813">Transport</keyword>
<name>CYB5E_ARATH</name>
<reference key="1">
    <citation type="journal article" date="1999" name="Plant Physiol.">
        <title>Microsomal electron transfer in higher plants: cloning and heterologous expression of NADH-cytochrome b5 reductase from Arabidopsis.</title>
        <authorList>
            <person name="Fukuchi-Mizutani M."/>
            <person name="Mizutani M."/>
            <person name="Tanaka Y."/>
            <person name="Kusumi T."/>
            <person name="Ohta D."/>
        </authorList>
    </citation>
    <scope>NUCLEOTIDE SEQUENCE [MRNA]</scope>
    <scope>FUNCTION</scope>
    <scope>TISSUE SPECIFICITY</scope>
    <source>
        <strain>cv. Columbia</strain>
    </source>
</reference>
<reference key="2">
    <citation type="journal article" date="1998" name="DNA Res.">
        <title>Structural analysis of Arabidopsis thaliana chromosome 5. VII. Sequence features of the regions of 1,013,767 bp covered by sixteen physically assigned P1 and TAC clones.</title>
        <authorList>
            <person name="Nakamura Y."/>
            <person name="Sato S."/>
            <person name="Asamizu E."/>
            <person name="Kaneko T."/>
            <person name="Kotani H."/>
            <person name="Miyajima N."/>
            <person name="Tabata S."/>
        </authorList>
    </citation>
    <scope>NUCLEOTIDE SEQUENCE [LARGE SCALE GENOMIC DNA]</scope>
    <source>
        <strain>cv. Columbia</strain>
    </source>
</reference>
<reference key="3">
    <citation type="journal article" date="2017" name="Plant J.">
        <title>Araport11: a complete reannotation of the Arabidopsis thaliana reference genome.</title>
        <authorList>
            <person name="Cheng C.Y."/>
            <person name="Krishnakumar V."/>
            <person name="Chan A.P."/>
            <person name="Thibaud-Nissen F."/>
            <person name="Schobel S."/>
            <person name="Town C.D."/>
        </authorList>
    </citation>
    <scope>GENOME REANNOTATION</scope>
    <source>
        <strain>cv. Columbia</strain>
    </source>
</reference>
<reference key="4">
    <citation type="journal article" date="2003" name="Science">
        <title>Empirical analysis of transcriptional activity in the Arabidopsis genome.</title>
        <authorList>
            <person name="Yamada K."/>
            <person name="Lim J."/>
            <person name="Dale J.M."/>
            <person name="Chen H."/>
            <person name="Shinn P."/>
            <person name="Palm C.J."/>
            <person name="Southwick A.M."/>
            <person name="Wu H.C."/>
            <person name="Kim C.J."/>
            <person name="Nguyen M."/>
            <person name="Pham P.K."/>
            <person name="Cheuk R.F."/>
            <person name="Karlin-Newmann G."/>
            <person name="Liu S.X."/>
            <person name="Lam B."/>
            <person name="Sakano H."/>
            <person name="Wu T."/>
            <person name="Yu G."/>
            <person name="Miranda M."/>
            <person name="Quach H.L."/>
            <person name="Tripp M."/>
            <person name="Chang C.H."/>
            <person name="Lee J.M."/>
            <person name="Toriumi M.J."/>
            <person name="Chan M.M."/>
            <person name="Tang C.C."/>
            <person name="Onodera C.S."/>
            <person name="Deng J.M."/>
            <person name="Akiyama K."/>
            <person name="Ansari Y."/>
            <person name="Arakawa T."/>
            <person name="Banh J."/>
            <person name="Banno F."/>
            <person name="Bowser L."/>
            <person name="Brooks S.Y."/>
            <person name="Carninci P."/>
            <person name="Chao Q."/>
            <person name="Choy N."/>
            <person name="Enju A."/>
            <person name="Goldsmith A.D."/>
            <person name="Gurjal M."/>
            <person name="Hansen N.F."/>
            <person name="Hayashizaki Y."/>
            <person name="Johnson-Hopson C."/>
            <person name="Hsuan V.W."/>
            <person name="Iida K."/>
            <person name="Karnes M."/>
            <person name="Khan S."/>
            <person name="Koesema E."/>
            <person name="Ishida J."/>
            <person name="Jiang P.X."/>
            <person name="Jones T."/>
            <person name="Kawai J."/>
            <person name="Kamiya A."/>
            <person name="Meyers C."/>
            <person name="Nakajima M."/>
            <person name="Narusaka M."/>
            <person name="Seki M."/>
            <person name="Sakurai T."/>
            <person name="Satou M."/>
            <person name="Tamse R."/>
            <person name="Vaysberg M."/>
            <person name="Wallender E.K."/>
            <person name="Wong C."/>
            <person name="Yamamura Y."/>
            <person name="Yuan S."/>
            <person name="Shinozaki K."/>
            <person name="Davis R.W."/>
            <person name="Theologis A."/>
            <person name="Ecker J.R."/>
        </authorList>
    </citation>
    <scope>NUCLEOTIDE SEQUENCE [LARGE SCALE MRNA]</scope>
    <source>
        <strain>cv. Columbia</strain>
    </source>
</reference>
<reference key="5">
    <citation type="submission" date="2002-03" db="EMBL/GenBank/DDBJ databases">
        <title>Full-length cDNA from Arabidopsis thaliana.</title>
        <authorList>
            <person name="Brover V.V."/>
            <person name="Troukhan M.E."/>
            <person name="Alexandrov N.A."/>
            <person name="Lu Y.-P."/>
            <person name="Flavell R.B."/>
            <person name="Feldmann K.A."/>
        </authorList>
    </citation>
    <scope>NUCLEOTIDE SEQUENCE [LARGE SCALE MRNA]</scope>
</reference>
<reference key="6">
    <citation type="journal article" date="1996" name="Plant J.">
        <title>Further progress towards a catalogue of all Arabidopsis genes: analysis of a set of 5000 non-redundant ESTs.</title>
        <authorList>
            <person name="Cooke R."/>
            <person name="Raynal M."/>
            <person name="Laudie M."/>
            <person name="Grellet F."/>
            <person name="Delseny M."/>
            <person name="Morris P.-C."/>
            <person name="Guerrier D."/>
            <person name="Giraudat J."/>
            <person name="Quigley F."/>
            <person name="Clabault G."/>
            <person name="Li Y.-F."/>
            <person name="Mache R."/>
            <person name="Krivitzky M."/>
            <person name="Gy I.J.-J."/>
            <person name="Kreis M."/>
            <person name="Lecharny A."/>
            <person name="Parmentier Y."/>
            <person name="Marbach J."/>
            <person name="Fleck J."/>
            <person name="Clement B."/>
            <person name="Philipps G."/>
            <person name="Herve C."/>
            <person name="Bardet C."/>
            <person name="Tremousaygue D."/>
            <person name="Lescure B."/>
            <person name="Lacomme C."/>
            <person name="Roby D."/>
            <person name="Jourjon M.-F."/>
            <person name="Chabrier P."/>
            <person name="Charpenteau J.-L."/>
            <person name="Desprez T."/>
            <person name="Amselem J."/>
            <person name="Chiapello H."/>
            <person name="Hoefte H."/>
        </authorList>
    </citation>
    <scope>NUCLEOTIDE SEQUENCE [LARGE SCALE MRNA] OF 1-113</scope>
    <source>
        <strain>cv. Columbia</strain>
    </source>
</reference>
<reference key="7">
    <citation type="journal article" date="2004" name="Mol. Cell. Proteomics">
        <title>Identification of new intrinsic proteins in Arabidopsis plasma membrane proteome.</title>
        <authorList>
            <person name="Marmagne A."/>
            <person name="Rouet M.-A."/>
            <person name="Ferro M."/>
            <person name="Rolland N."/>
            <person name="Alcon C."/>
            <person name="Joyard J."/>
            <person name="Garin J."/>
            <person name="Barbier-Brygoo H."/>
            <person name="Ephritikhine G."/>
        </authorList>
    </citation>
    <scope>IDENTIFICATION BY MASS SPECTROMETRY</scope>
    <scope>SUBCELLULAR LOCATION</scope>
</reference>
<reference key="8">
    <citation type="journal article" date="2009" name="Plant J.">
        <title>Functional association of cell death suppressor, Arabidopsis Bax inhibitor-1, with fatty acid 2-hydroxylation through cytochrome b(5).</title>
        <authorList>
            <person name="Nagano M."/>
            <person name="Ihara-Ohori Y."/>
            <person name="Imai H."/>
            <person name="Inada N."/>
            <person name="Fujimoto M."/>
            <person name="Tsutsumi N."/>
            <person name="Uchimiya H."/>
            <person name="Kawai-Yamada M."/>
        </authorList>
    </citation>
    <scope>INTERACTION WITH BI-1; FAH1 AND FAH2</scope>
    <scope>NOMENCLATURE</scope>
</reference>
<reference key="9">
    <citation type="journal article" date="2010" name="Plant Cell">
        <title>ANKYRIN REPEAT-CONTAINING PROTEIN 2A is an essential molecular chaperone for peroxisomal membrane-bound ASCORBATE PEROXIDASE3 in Arabidopsis.</title>
        <authorList>
            <person name="Shen G."/>
            <person name="Kuppu S."/>
            <person name="Venkataramani S."/>
            <person name="Wang J."/>
            <person name="Yan J."/>
            <person name="Qiu X."/>
            <person name="Zhang H."/>
        </authorList>
    </citation>
    <scope>INTERACTION WITH AKR2A</scope>
    <source>
        <strain>cv. C24</strain>
        <strain>cv. Columbia</strain>
    </source>
</reference>
<reference key="10">
    <citation type="journal article" date="2010" name="Plant Signal. Behav.">
        <title>Is AKR2A an essential molecular chaperone for a class of membrane-bound proteins in plants?</title>
        <authorList>
            <person name="Zhang H."/>
            <person name="Li X."/>
            <person name="Zhang Y."/>
            <person name="Kuppu S."/>
            <person name="Shen G."/>
        </authorList>
    </citation>
    <scope>AKR2A-BINDING SEQUENCE</scope>
    <scope>REVIEW</scope>
</reference>
<reference key="11">
    <citation type="journal article" date="2012" name="Plant Cell">
        <title>Reconstitution of plant alkane biosynthesis in yeast demonstrates that Arabidopsis ECERIFERUM1 and ECERIFERUM3 are core components of a very-long-chain alkane synthesis complex.</title>
        <authorList>
            <person name="Bernard A."/>
            <person name="Domergue F."/>
            <person name="Pascal S."/>
            <person name="Jetter R."/>
            <person name="Renne C."/>
            <person name="Faure J.D."/>
            <person name="Haslam R.P."/>
            <person name="Napier J.A."/>
            <person name="Lessire R."/>
            <person name="Joubes J."/>
        </authorList>
    </citation>
    <scope>INTERACTION WITH CER1</scope>
    <scope>SUBCELLULAR LOCATION</scope>
    <source>
        <strain>cv. Columbia</strain>
    </source>
</reference>
<reference key="12">
    <citation type="journal article" date="2012" name="PLoS ONE">
        <title>Higher plant cytochrome b5 polypeptides modulate fatty acid desaturation.</title>
        <authorList>
            <person name="Kumar R."/>
            <person name="Tran L.S."/>
            <person name="Neelakandan A.K."/>
            <person name="Nguyen H.T."/>
        </authorList>
    </citation>
    <scope>FUNCTION</scope>
    <scope>NOMENCLATURE</scope>
</reference>
<feature type="chain" id="PRO_0000166020" description="Cytochrome b5 isoform E">
    <location>
        <begin position="1"/>
        <end position="134"/>
    </location>
</feature>
<feature type="transmembrane region" description="Helical" evidence="1">
    <location>
        <begin position="107"/>
        <end position="127"/>
    </location>
</feature>
<feature type="domain" description="Cytochrome b5 heme-binding" evidence="2">
    <location>
        <begin position="5"/>
        <end position="81"/>
    </location>
</feature>
<feature type="short sequence motif" description="AKR2A-binding sequence (ABS) required for endoplasmic reticulum membrane targeting" evidence="6">
    <location>
        <begin position="128"/>
        <end position="134"/>
    </location>
</feature>
<feature type="binding site" description="axial binding residue" evidence="2">
    <location>
        <position position="40"/>
    </location>
    <ligand>
        <name>heme</name>
        <dbReference type="ChEBI" id="CHEBI:30413"/>
    </ligand>
    <ligandPart>
        <name>Fe</name>
        <dbReference type="ChEBI" id="CHEBI:18248"/>
    </ligandPart>
</feature>
<feature type="binding site" description="axial binding residue" evidence="2">
    <location>
        <position position="64"/>
    </location>
    <ligand>
        <name>heme</name>
        <dbReference type="ChEBI" id="CHEBI:30413"/>
    </ligand>
    <ligandPart>
        <name>Fe</name>
        <dbReference type="ChEBI" id="CHEBI:18248"/>
    </ligandPart>
</feature>
<feature type="sequence conflict" description="In Ref. 6; CAA23377." evidence="12" ref="6">
    <original>MSS</original>
    <variation>ARA</variation>
    <location>
        <begin position="1"/>
        <end position="3"/>
    </location>
</feature>
<comment type="function">
    <text evidence="7 9">Membrane bound hemoprotein which function as an electron carrier for several membrane bound oxygenases, including fatty acid desaturases.</text>
</comment>
<comment type="subunit">
    <text evidence="4 5 8">Interacts with CER1, BI-1, FAH1 and FAH2. Interacts with AKR2A (PubMed:20215589).</text>
</comment>
<comment type="subcellular location">
    <subcellularLocation>
        <location evidence="3">Cell membrane</location>
    </subcellularLocation>
    <subcellularLocation>
        <location evidence="8">Endoplasmic reticulum membrane</location>
        <topology evidence="8">Single-pass membrane protein</topology>
    </subcellularLocation>
</comment>
<comment type="tissue specificity">
    <text evidence="9">Expressed in roots, stems, leaves, flowers and siliques.</text>
</comment>
<comment type="similarity">
    <text evidence="12">Belongs to the cytochrome b5 family.</text>
</comment>
<accession>Q42342</accession>
<accession>Q9SB05</accession>
<protein>
    <recommendedName>
        <fullName evidence="10">Cytochrome b5 isoform E</fullName>
        <shortName evidence="10">AtCb5-E</shortName>
    </recommendedName>
    <alternativeName>
        <fullName>Cytochrome b5 isoform 1</fullName>
    </alternativeName>
    <alternativeName>
        <fullName evidence="11">Cytochrome b5 isoform A</fullName>
        <shortName evidence="11">AtCb5-A</shortName>
    </alternativeName>
</protein>
<evidence type="ECO:0000255" key="1"/>
<evidence type="ECO:0000255" key="2">
    <source>
        <dbReference type="PROSITE-ProRule" id="PRU00279"/>
    </source>
</evidence>
<evidence type="ECO:0000269" key="3">
    <source>
    </source>
</evidence>
<evidence type="ECO:0000269" key="4">
    <source>
    </source>
</evidence>
<evidence type="ECO:0000269" key="5">
    <source>
    </source>
</evidence>
<evidence type="ECO:0000269" key="6">
    <source>
    </source>
</evidence>
<evidence type="ECO:0000269" key="7">
    <source>
    </source>
</evidence>
<evidence type="ECO:0000269" key="8">
    <source>
    </source>
</evidence>
<evidence type="ECO:0000269" key="9">
    <source>
    </source>
</evidence>
<evidence type="ECO:0000303" key="10">
    <source>
    </source>
</evidence>
<evidence type="ECO:0000303" key="11">
    <source>
    </source>
</evidence>
<evidence type="ECO:0000305" key="12"/>
<sequence length="134" mass="15084">MSSDRKVLSFEEVSKHNKTKDCWLIISGKVYDVTPFMDDHPGGDEVLLSSTGKDATNDFEDVGHSDTARDMMDKYFIGEIDSSSVPATRTYVAPQQPAYNQDKTPEFIIKILQFLVPILILGLALVVRHYTKKD</sequence>
<dbReference type="EMBL" id="AB007801">
    <property type="protein sequence ID" value="BAA74839.1"/>
    <property type="molecule type" value="mRNA"/>
</dbReference>
<dbReference type="EMBL" id="AB015476">
    <property type="protein sequence ID" value="BAB09732.1"/>
    <property type="molecule type" value="Genomic_DNA"/>
</dbReference>
<dbReference type="EMBL" id="CP002688">
    <property type="protein sequence ID" value="AED96377.1"/>
    <property type="molecule type" value="Genomic_DNA"/>
</dbReference>
<dbReference type="EMBL" id="AY080878">
    <property type="protein sequence ID" value="AAL87348.1"/>
    <property type="molecule type" value="mRNA"/>
</dbReference>
<dbReference type="EMBL" id="AY114045">
    <property type="protein sequence ID" value="AAM45093.1"/>
    <property type="molecule type" value="mRNA"/>
</dbReference>
<dbReference type="EMBL" id="AY087070">
    <property type="protein sequence ID" value="AAM64631.1"/>
    <property type="molecule type" value="mRNA"/>
</dbReference>
<dbReference type="EMBL" id="F20001">
    <property type="protein sequence ID" value="CAA23377.1"/>
    <property type="molecule type" value="mRNA"/>
</dbReference>
<dbReference type="PIR" id="T52469">
    <property type="entry name" value="T52469"/>
</dbReference>
<dbReference type="RefSeq" id="NP_200168.1">
    <property type="nucleotide sequence ID" value="NM_124736.4"/>
</dbReference>
<dbReference type="SMR" id="Q42342"/>
<dbReference type="BioGRID" id="20682">
    <property type="interactions" value="13"/>
</dbReference>
<dbReference type="FunCoup" id="Q42342">
    <property type="interactions" value="3654"/>
</dbReference>
<dbReference type="IntAct" id="Q42342">
    <property type="interactions" value="11"/>
</dbReference>
<dbReference type="STRING" id="3702.Q42342"/>
<dbReference type="SwissPalm" id="Q42342"/>
<dbReference type="PaxDb" id="3702-AT5G53560.1"/>
<dbReference type="ProteomicsDB" id="220435"/>
<dbReference type="EnsemblPlants" id="AT5G53560.1">
    <property type="protein sequence ID" value="AT5G53560.1"/>
    <property type="gene ID" value="AT5G53560"/>
</dbReference>
<dbReference type="GeneID" id="835438"/>
<dbReference type="Gramene" id="AT5G53560.1">
    <property type="protein sequence ID" value="AT5G53560.1"/>
    <property type="gene ID" value="AT5G53560"/>
</dbReference>
<dbReference type="KEGG" id="ath:AT5G53560"/>
<dbReference type="Araport" id="AT5G53560"/>
<dbReference type="TAIR" id="AT5G53560">
    <property type="gene designation" value="CB5-E"/>
</dbReference>
<dbReference type="eggNOG" id="KOG0537">
    <property type="taxonomic scope" value="Eukaryota"/>
</dbReference>
<dbReference type="HOGENOM" id="CLU_102602_3_0_1"/>
<dbReference type="InParanoid" id="Q42342"/>
<dbReference type="OMA" id="RSYTREN"/>
<dbReference type="OrthoDB" id="260519at2759"/>
<dbReference type="PhylomeDB" id="Q42342"/>
<dbReference type="CD-CODE" id="4299E36E">
    <property type="entry name" value="Nucleolus"/>
</dbReference>
<dbReference type="PRO" id="PR:Q42342"/>
<dbReference type="Proteomes" id="UP000006548">
    <property type="component" value="Chromosome 5"/>
</dbReference>
<dbReference type="ExpressionAtlas" id="Q42342">
    <property type="expression patterns" value="baseline and differential"/>
</dbReference>
<dbReference type="GO" id="GO:0009535">
    <property type="term" value="C:chloroplast thylakoid membrane"/>
    <property type="evidence" value="ECO:0007005"/>
    <property type="project" value="TAIR"/>
</dbReference>
<dbReference type="GO" id="GO:0005783">
    <property type="term" value="C:endoplasmic reticulum"/>
    <property type="evidence" value="ECO:0007005"/>
    <property type="project" value="TAIR"/>
</dbReference>
<dbReference type="GO" id="GO:0005789">
    <property type="term" value="C:endoplasmic reticulum membrane"/>
    <property type="evidence" value="ECO:0000303"/>
    <property type="project" value="TAIR"/>
</dbReference>
<dbReference type="GO" id="GO:0016020">
    <property type="term" value="C:membrane"/>
    <property type="evidence" value="ECO:0007005"/>
    <property type="project" value="TAIR"/>
</dbReference>
<dbReference type="GO" id="GO:0000325">
    <property type="term" value="C:plant-type vacuole"/>
    <property type="evidence" value="ECO:0007005"/>
    <property type="project" value="TAIR"/>
</dbReference>
<dbReference type="GO" id="GO:0005886">
    <property type="term" value="C:plasma membrane"/>
    <property type="evidence" value="ECO:0007005"/>
    <property type="project" value="TAIR"/>
</dbReference>
<dbReference type="GO" id="GO:0009536">
    <property type="term" value="C:plastid"/>
    <property type="evidence" value="ECO:0007005"/>
    <property type="project" value="TAIR"/>
</dbReference>
<dbReference type="GO" id="GO:0020037">
    <property type="term" value="F:heme binding"/>
    <property type="evidence" value="ECO:0007669"/>
    <property type="project" value="InterPro"/>
</dbReference>
<dbReference type="GO" id="GO:0046872">
    <property type="term" value="F:metal ion binding"/>
    <property type="evidence" value="ECO:0007669"/>
    <property type="project" value="UniProtKB-KW"/>
</dbReference>
<dbReference type="FunFam" id="3.10.120.10:FF:000002">
    <property type="entry name" value="Cytochrome b5 type B"/>
    <property type="match status" value="1"/>
</dbReference>
<dbReference type="Gene3D" id="3.10.120.10">
    <property type="entry name" value="Cytochrome b5-like heme/steroid binding domain"/>
    <property type="match status" value="1"/>
</dbReference>
<dbReference type="InterPro" id="IPR001199">
    <property type="entry name" value="Cyt_B5-like_heme/steroid-bd"/>
</dbReference>
<dbReference type="InterPro" id="IPR036400">
    <property type="entry name" value="Cyt_B5-like_heme/steroid_sf"/>
</dbReference>
<dbReference type="InterPro" id="IPR018506">
    <property type="entry name" value="Cyt_B5_heme-BS"/>
</dbReference>
<dbReference type="InterPro" id="IPR050668">
    <property type="entry name" value="Cytochrome_b5"/>
</dbReference>
<dbReference type="PANTHER" id="PTHR19359">
    <property type="entry name" value="CYTOCHROME B5"/>
    <property type="match status" value="1"/>
</dbReference>
<dbReference type="PANTHER" id="PTHR19359:SF135">
    <property type="entry name" value="CYTOCHROME B5 ISOFORM E"/>
    <property type="match status" value="1"/>
</dbReference>
<dbReference type="Pfam" id="PF00173">
    <property type="entry name" value="Cyt-b5"/>
    <property type="match status" value="1"/>
</dbReference>
<dbReference type="PRINTS" id="PR00363">
    <property type="entry name" value="CYTOCHROMEB5"/>
</dbReference>
<dbReference type="SMART" id="SM01117">
    <property type="entry name" value="Cyt-b5"/>
    <property type="match status" value="1"/>
</dbReference>
<dbReference type="SUPFAM" id="SSF55856">
    <property type="entry name" value="Cytochrome b5-like heme/steroid binding domain"/>
    <property type="match status" value="1"/>
</dbReference>
<dbReference type="PROSITE" id="PS00191">
    <property type="entry name" value="CYTOCHROME_B5_1"/>
    <property type="match status" value="1"/>
</dbReference>
<dbReference type="PROSITE" id="PS50255">
    <property type="entry name" value="CYTOCHROME_B5_2"/>
    <property type="match status" value="1"/>
</dbReference>
<organism>
    <name type="scientific">Arabidopsis thaliana</name>
    <name type="common">Mouse-ear cress</name>
    <dbReference type="NCBI Taxonomy" id="3702"/>
    <lineage>
        <taxon>Eukaryota</taxon>
        <taxon>Viridiplantae</taxon>
        <taxon>Streptophyta</taxon>
        <taxon>Embryophyta</taxon>
        <taxon>Tracheophyta</taxon>
        <taxon>Spermatophyta</taxon>
        <taxon>Magnoliopsida</taxon>
        <taxon>eudicotyledons</taxon>
        <taxon>Gunneridae</taxon>
        <taxon>Pentapetalae</taxon>
        <taxon>rosids</taxon>
        <taxon>malvids</taxon>
        <taxon>Brassicales</taxon>
        <taxon>Brassicaceae</taxon>
        <taxon>Camelineae</taxon>
        <taxon>Arabidopsis</taxon>
    </lineage>
</organism>